<organism>
    <name type="scientific">Enterococcus faecalis (strain ATCC 700802 / V583)</name>
    <dbReference type="NCBI Taxonomy" id="226185"/>
    <lineage>
        <taxon>Bacteria</taxon>
        <taxon>Bacillati</taxon>
        <taxon>Bacillota</taxon>
        <taxon>Bacilli</taxon>
        <taxon>Lactobacillales</taxon>
        <taxon>Enterococcaceae</taxon>
        <taxon>Enterococcus</taxon>
    </lineage>
</organism>
<gene>
    <name evidence="1" type="primary">rpsD</name>
    <name type="ordered locus">EF_3070</name>
</gene>
<reference key="1">
    <citation type="journal article" date="2003" name="Science">
        <title>Role of mobile DNA in the evolution of vancomycin-resistant Enterococcus faecalis.</title>
        <authorList>
            <person name="Paulsen I.T."/>
            <person name="Banerjei L."/>
            <person name="Myers G.S.A."/>
            <person name="Nelson K.E."/>
            <person name="Seshadri R."/>
            <person name="Read T.D."/>
            <person name="Fouts D.E."/>
            <person name="Eisen J.A."/>
            <person name="Gill S.R."/>
            <person name="Heidelberg J.F."/>
            <person name="Tettelin H."/>
            <person name="Dodson R.J."/>
            <person name="Umayam L.A."/>
            <person name="Brinkac L.M."/>
            <person name="Beanan M.J."/>
            <person name="Daugherty S.C."/>
            <person name="DeBoy R.T."/>
            <person name="Durkin S.A."/>
            <person name="Kolonay J.F."/>
            <person name="Madupu R."/>
            <person name="Nelson W.C."/>
            <person name="Vamathevan J.J."/>
            <person name="Tran B."/>
            <person name="Upton J."/>
            <person name="Hansen T."/>
            <person name="Shetty J."/>
            <person name="Khouri H.M."/>
            <person name="Utterback T.R."/>
            <person name="Radune D."/>
            <person name="Ketchum K.A."/>
            <person name="Dougherty B.A."/>
            <person name="Fraser C.M."/>
        </authorList>
    </citation>
    <scope>NUCLEOTIDE SEQUENCE [LARGE SCALE GENOMIC DNA]</scope>
    <source>
        <strain>ATCC 700802 / V583</strain>
    </source>
</reference>
<proteinExistence type="evidence at protein level"/>
<keyword id="KW-0002">3D-structure</keyword>
<keyword id="KW-1185">Reference proteome</keyword>
<keyword id="KW-0687">Ribonucleoprotein</keyword>
<keyword id="KW-0689">Ribosomal protein</keyword>
<keyword id="KW-0694">RNA-binding</keyword>
<keyword id="KW-0699">rRNA-binding</keyword>
<comment type="function">
    <text evidence="1">One of the primary rRNA binding proteins, it binds directly to 16S rRNA where it nucleates assembly of the body of the 30S subunit.</text>
</comment>
<comment type="function">
    <text evidence="1">With S5 and S12 plays an important role in translational accuracy.</text>
</comment>
<comment type="subunit">
    <text evidence="1">Part of the 30S ribosomal subunit. Contacts protein S5. The interaction surface between S4 and S5 is involved in control of translational fidelity.</text>
</comment>
<comment type="similarity">
    <text evidence="1">Belongs to the universal ribosomal protein uS4 family.</text>
</comment>
<sequence length="203" mass="23234">MSRYTGPSWKVSRRLGISLSGTGKELARRPYKPGQHGPNSRGKVSEYGMQLTEKQKLRHMYGMNERQFRTLFIKASKIKEGKHGVNFMVLLEQRLDNVVYRLGLATTRRQARQLVNHGHITVDGKRVDIPSYHVEVGQVIGVREKSQNISTIKEAVEATVGRPAFVSFDTEKLEGSFTRLPERDELYPEIDEALVVEYYNQKL</sequence>
<evidence type="ECO:0000255" key="1">
    <source>
        <dbReference type="HAMAP-Rule" id="MF_01306"/>
    </source>
</evidence>
<evidence type="ECO:0000256" key="2">
    <source>
        <dbReference type="SAM" id="MobiDB-lite"/>
    </source>
</evidence>
<evidence type="ECO:0000305" key="3"/>
<evidence type="ECO:0007829" key="4">
    <source>
        <dbReference type="PDB" id="6WUB"/>
    </source>
</evidence>
<accession>Q82ZI6</accession>
<protein>
    <recommendedName>
        <fullName evidence="1">Small ribosomal subunit protein uS4</fullName>
    </recommendedName>
    <alternativeName>
        <fullName evidence="3">30S ribosomal protein S4</fullName>
    </alternativeName>
</protein>
<dbReference type="EMBL" id="AE016830">
    <property type="protein sequence ID" value="AAO82752.1"/>
    <property type="molecule type" value="Genomic_DNA"/>
</dbReference>
<dbReference type="RefSeq" id="NP_816682.1">
    <property type="nucleotide sequence ID" value="NC_004668.1"/>
</dbReference>
<dbReference type="RefSeq" id="WP_002365342.1">
    <property type="nucleotide sequence ID" value="NZ_KE136524.1"/>
</dbReference>
<dbReference type="PDB" id="6WUB">
    <property type="method" value="EM"/>
    <property type="resolution" value="3.20 A"/>
    <property type="chains" value="d=2-202"/>
</dbReference>
<dbReference type="PDB" id="7P7Q">
    <property type="method" value="EM"/>
    <property type="resolution" value="2.40 A"/>
    <property type="chains" value="e=1-203"/>
</dbReference>
<dbReference type="PDB" id="7P7R">
    <property type="method" value="EM"/>
    <property type="resolution" value="2.90 A"/>
    <property type="chains" value="e=1-203"/>
</dbReference>
<dbReference type="PDBsum" id="6WUB"/>
<dbReference type="PDBsum" id="7P7Q"/>
<dbReference type="PDBsum" id="7P7R"/>
<dbReference type="EMDB" id="EMD-13241"/>
<dbReference type="EMDB" id="EMD-13242"/>
<dbReference type="SMR" id="Q82ZI6"/>
<dbReference type="STRING" id="226185.EF_3070"/>
<dbReference type="EnsemblBacteria" id="AAO82752">
    <property type="protein sequence ID" value="AAO82752"/>
    <property type="gene ID" value="EF_3070"/>
</dbReference>
<dbReference type="GeneID" id="60894959"/>
<dbReference type="KEGG" id="efa:EF3070"/>
<dbReference type="PATRIC" id="fig|226185.45.peg.501"/>
<dbReference type="eggNOG" id="COG0522">
    <property type="taxonomic scope" value="Bacteria"/>
</dbReference>
<dbReference type="HOGENOM" id="CLU_092403_0_1_9"/>
<dbReference type="Proteomes" id="UP000001415">
    <property type="component" value="Chromosome"/>
</dbReference>
<dbReference type="GO" id="GO:0015935">
    <property type="term" value="C:small ribosomal subunit"/>
    <property type="evidence" value="ECO:0007669"/>
    <property type="project" value="InterPro"/>
</dbReference>
<dbReference type="GO" id="GO:0019843">
    <property type="term" value="F:rRNA binding"/>
    <property type="evidence" value="ECO:0007669"/>
    <property type="project" value="UniProtKB-UniRule"/>
</dbReference>
<dbReference type="GO" id="GO:0003735">
    <property type="term" value="F:structural constituent of ribosome"/>
    <property type="evidence" value="ECO:0007669"/>
    <property type="project" value="InterPro"/>
</dbReference>
<dbReference type="GO" id="GO:0042274">
    <property type="term" value="P:ribosomal small subunit biogenesis"/>
    <property type="evidence" value="ECO:0007669"/>
    <property type="project" value="TreeGrafter"/>
</dbReference>
<dbReference type="GO" id="GO:0006412">
    <property type="term" value="P:translation"/>
    <property type="evidence" value="ECO:0007669"/>
    <property type="project" value="UniProtKB-UniRule"/>
</dbReference>
<dbReference type="CDD" id="cd00165">
    <property type="entry name" value="S4"/>
    <property type="match status" value="1"/>
</dbReference>
<dbReference type="FunFam" id="1.10.1050.10:FF:000001">
    <property type="entry name" value="30S ribosomal protein S4"/>
    <property type="match status" value="1"/>
</dbReference>
<dbReference type="FunFam" id="3.10.290.10:FF:000001">
    <property type="entry name" value="30S ribosomal protein S4"/>
    <property type="match status" value="1"/>
</dbReference>
<dbReference type="Gene3D" id="1.10.1050.10">
    <property type="entry name" value="Ribosomal Protein S4 Delta 41, Chain A, domain 1"/>
    <property type="match status" value="1"/>
</dbReference>
<dbReference type="Gene3D" id="3.10.290.10">
    <property type="entry name" value="RNA-binding S4 domain"/>
    <property type="match status" value="1"/>
</dbReference>
<dbReference type="HAMAP" id="MF_01306_B">
    <property type="entry name" value="Ribosomal_uS4_B"/>
    <property type="match status" value="1"/>
</dbReference>
<dbReference type="InterPro" id="IPR022801">
    <property type="entry name" value="Ribosomal_uS4"/>
</dbReference>
<dbReference type="InterPro" id="IPR005709">
    <property type="entry name" value="Ribosomal_uS4_bac-type"/>
</dbReference>
<dbReference type="InterPro" id="IPR018079">
    <property type="entry name" value="Ribosomal_uS4_CS"/>
</dbReference>
<dbReference type="InterPro" id="IPR001912">
    <property type="entry name" value="Ribosomal_uS4_N"/>
</dbReference>
<dbReference type="InterPro" id="IPR002942">
    <property type="entry name" value="S4_RNA-bd"/>
</dbReference>
<dbReference type="InterPro" id="IPR036986">
    <property type="entry name" value="S4_RNA-bd_sf"/>
</dbReference>
<dbReference type="NCBIfam" id="NF003717">
    <property type="entry name" value="PRK05327.1"/>
    <property type="match status" value="1"/>
</dbReference>
<dbReference type="NCBIfam" id="TIGR01017">
    <property type="entry name" value="rpsD_bact"/>
    <property type="match status" value="1"/>
</dbReference>
<dbReference type="PANTHER" id="PTHR11831">
    <property type="entry name" value="30S 40S RIBOSOMAL PROTEIN"/>
    <property type="match status" value="1"/>
</dbReference>
<dbReference type="PANTHER" id="PTHR11831:SF4">
    <property type="entry name" value="SMALL RIBOSOMAL SUBUNIT PROTEIN US4M"/>
    <property type="match status" value="1"/>
</dbReference>
<dbReference type="Pfam" id="PF00163">
    <property type="entry name" value="Ribosomal_S4"/>
    <property type="match status" value="1"/>
</dbReference>
<dbReference type="Pfam" id="PF01479">
    <property type="entry name" value="S4"/>
    <property type="match status" value="1"/>
</dbReference>
<dbReference type="SMART" id="SM01390">
    <property type="entry name" value="Ribosomal_S4"/>
    <property type="match status" value="1"/>
</dbReference>
<dbReference type="SMART" id="SM00363">
    <property type="entry name" value="S4"/>
    <property type="match status" value="1"/>
</dbReference>
<dbReference type="SUPFAM" id="SSF55174">
    <property type="entry name" value="Alpha-L RNA-binding motif"/>
    <property type="match status" value="1"/>
</dbReference>
<dbReference type="PROSITE" id="PS00632">
    <property type="entry name" value="RIBOSOMAL_S4"/>
    <property type="match status" value="1"/>
</dbReference>
<dbReference type="PROSITE" id="PS50889">
    <property type="entry name" value="S4"/>
    <property type="match status" value="1"/>
</dbReference>
<name>RS4_ENTFA</name>
<feature type="chain" id="PRO_0000132383" description="Small ribosomal subunit protein uS4">
    <location>
        <begin position="1"/>
        <end position="203"/>
    </location>
</feature>
<feature type="domain" description="S4 RNA-binding" evidence="1">
    <location>
        <begin position="93"/>
        <end position="156"/>
    </location>
</feature>
<feature type="region of interest" description="Disordered" evidence="2">
    <location>
        <begin position="22"/>
        <end position="45"/>
    </location>
</feature>
<feature type="helix" evidence="4">
    <location>
        <begin position="10"/>
        <end position="15"/>
    </location>
</feature>
<feature type="strand" evidence="4">
    <location>
        <begin position="25"/>
        <end position="28"/>
    </location>
</feature>
<feature type="strand" evidence="4">
    <location>
        <begin position="37"/>
        <end position="39"/>
    </location>
</feature>
<feature type="helix" evidence="4">
    <location>
        <begin position="46"/>
        <end position="60"/>
    </location>
</feature>
<feature type="helix" evidence="4">
    <location>
        <begin position="65"/>
        <end position="75"/>
    </location>
</feature>
<feature type="helix" evidence="4">
    <location>
        <begin position="84"/>
        <end position="90"/>
    </location>
</feature>
<feature type="helix" evidence="4">
    <location>
        <begin position="91"/>
        <end position="93"/>
    </location>
</feature>
<feature type="helix" evidence="4">
    <location>
        <begin position="95"/>
        <end position="102"/>
    </location>
</feature>
<feature type="helix" evidence="4">
    <location>
        <begin position="108"/>
        <end position="116"/>
    </location>
</feature>
<feature type="helix" evidence="4">
    <location>
        <begin position="150"/>
        <end position="157"/>
    </location>
</feature>
<feature type="strand" evidence="4">
    <location>
        <begin position="164"/>
        <end position="169"/>
    </location>
</feature>
<feature type="turn" evidence="4">
    <location>
        <begin position="170"/>
        <end position="173"/>
    </location>
</feature>
<feature type="strand" evidence="4">
    <location>
        <begin position="174"/>
        <end position="179"/>
    </location>
</feature>
<feature type="helix" evidence="4">
    <location>
        <begin position="183"/>
        <end position="185"/>
    </location>
</feature>
<feature type="helix" evidence="4">
    <location>
        <begin position="194"/>
        <end position="198"/>
    </location>
</feature>